<evidence type="ECO:0000250" key="1"/>
<evidence type="ECO:0000250" key="2">
    <source>
        <dbReference type="UniProtKB" id="Q9ULA0"/>
    </source>
</evidence>
<evidence type="ECO:0000305" key="3"/>
<evidence type="ECO:0000312" key="4">
    <source>
        <dbReference type="MGI" id="MGI:1278328"/>
    </source>
</evidence>
<dbReference type="EC" id="3.4.11.21" evidence="2"/>
<dbReference type="EMBL" id="AF005051">
    <property type="protein sequence ID" value="AAD01212.1"/>
    <property type="molecule type" value="mRNA"/>
</dbReference>
<dbReference type="EMBL" id="AK166276">
    <property type="protein sequence ID" value="BAE38675.1"/>
    <property type="molecule type" value="mRNA"/>
</dbReference>
<dbReference type="EMBL" id="CH466548">
    <property type="protein sequence ID" value="EDL00396.1"/>
    <property type="molecule type" value="Genomic_DNA"/>
</dbReference>
<dbReference type="EMBL" id="CH466548">
    <property type="protein sequence ID" value="EDL00398.1"/>
    <property type="molecule type" value="Genomic_DNA"/>
</dbReference>
<dbReference type="EMBL" id="CH466548">
    <property type="protein sequence ID" value="EDL00400.1"/>
    <property type="molecule type" value="Genomic_DNA"/>
</dbReference>
<dbReference type="EMBL" id="CH466548">
    <property type="protein sequence ID" value="EDL00401.1"/>
    <property type="molecule type" value="Genomic_DNA"/>
</dbReference>
<dbReference type="EMBL" id="BC092232">
    <property type="protein sequence ID" value="AAH92232.1"/>
    <property type="molecule type" value="mRNA"/>
</dbReference>
<dbReference type="CCDS" id="CCDS15070.1"/>
<dbReference type="RefSeq" id="NP_001104301.1">
    <property type="nucleotide sequence ID" value="NM_001110831.1"/>
</dbReference>
<dbReference type="RefSeq" id="NP_001407066.1">
    <property type="nucleotide sequence ID" value="NM_001420137.1"/>
</dbReference>
<dbReference type="RefSeq" id="NP_001407067.1">
    <property type="nucleotide sequence ID" value="NM_001420138.1"/>
</dbReference>
<dbReference type="RefSeq" id="NP_001407068.1">
    <property type="nucleotide sequence ID" value="NM_001420139.1"/>
</dbReference>
<dbReference type="RefSeq" id="NP_001407069.1">
    <property type="nucleotide sequence ID" value="NM_001420140.1"/>
</dbReference>
<dbReference type="RefSeq" id="NP_058574.3">
    <property type="nucleotide sequence ID" value="NM_016878.4"/>
</dbReference>
<dbReference type="RefSeq" id="XP_006496468.1">
    <property type="nucleotide sequence ID" value="XM_006496405.1"/>
</dbReference>
<dbReference type="RefSeq" id="XP_006496469.1">
    <property type="nucleotide sequence ID" value="XM_006496406.1"/>
</dbReference>
<dbReference type="SMR" id="Q9Z2W0"/>
<dbReference type="BioGRID" id="199263">
    <property type="interactions" value="9"/>
</dbReference>
<dbReference type="FunCoup" id="Q9Z2W0">
    <property type="interactions" value="1871"/>
</dbReference>
<dbReference type="IntAct" id="Q9Z2W0">
    <property type="interactions" value="1"/>
</dbReference>
<dbReference type="STRING" id="10090.ENSMUSP00000140864"/>
<dbReference type="MEROPS" id="M18.002"/>
<dbReference type="iPTMnet" id="Q9Z2W0"/>
<dbReference type="PhosphoSitePlus" id="Q9Z2W0"/>
<dbReference type="SwissPalm" id="Q9Z2W0"/>
<dbReference type="REPRODUCTION-2DPAGE" id="Q9Z2W0"/>
<dbReference type="jPOST" id="Q9Z2W0"/>
<dbReference type="PaxDb" id="10090-ENSMUSP00000109235"/>
<dbReference type="ProteomicsDB" id="277586"/>
<dbReference type="Pumba" id="Q9Z2W0"/>
<dbReference type="Antibodypedia" id="34327">
    <property type="antibodies" value="196 antibodies from 28 providers"/>
</dbReference>
<dbReference type="DNASU" id="13437"/>
<dbReference type="Ensembl" id="ENSMUST00000066668.14">
    <property type="protein sequence ID" value="ENSMUSP00000070821.8"/>
    <property type="gene ID" value="ENSMUSG00000026209.16"/>
</dbReference>
<dbReference type="Ensembl" id="ENSMUST00000113605.10">
    <property type="protein sequence ID" value="ENSMUSP00000109235.4"/>
    <property type="gene ID" value="ENSMUSG00000026209.16"/>
</dbReference>
<dbReference type="Ensembl" id="ENSMUST00000187836.7">
    <property type="protein sequence ID" value="ENSMUSP00000139739.2"/>
    <property type="gene ID" value="ENSMUSG00000026209.16"/>
</dbReference>
<dbReference type="GeneID" id="13437"/>
<dbReference type="KEGG" id="mmu:13437"/>
<dbReference type="UCSC" id="uc007bot.2">
    <property type="organism name" value="mouse"/>
</dbReference>
<dbReference type="AGR" id="MGI:1278328"/>
<dbReference type="CTD" id="23549"/>
<dbReference type="MGI" id="MGI:1278328">
    <property type="gene designation" value="Dnpep"/>
</dbReference>
<dbReference type="VEuPathDB" id="HostDB:ENSMUSG00000026209"/>
<dbReference type="eggNOG" id="KOG2596">
    <property type="taxonomic scope" value="Eukaryota"/>
</dbReference>
<dbReference type="GeneTree" id="ENSGT00390000003164"/>
<dbReference type="HOGENOM" id="CLU_019532_2_0_1"/>
<dbReference type="InParanoid" id="Q9Z2W0"/>
<dbReference type="OMA" id="GPILKVN"/>
<dbReference type="OrthoDB" id="9880441at2759"/>
<dbReference type="TreeFam" id="TF300487"/>
<dbReference type="BRENDA" id="3.4.11.21">
    <property type="organism ID" value="3474"/>
</dbReference>
<dbReference type="BioGRID-ORCS" id="13437">
    <property type="hits" value="3 hits in 78 CRISPR screens"/>
</dbReference>
<dbReference type="ChiTaRS" id="Dnpep">
    <property type="organism name" value="mouse"/>
</dbReference>
<dbReference type="PRO" id="PR:Q9Z2W0"/>
<dbReference type="Proteomes" id="UP000000589">
    <property type="component" value="Chromosome 1"/>
</dbReference>
<dbReference type="RNAct" id="Q9Z2W0">
    <property type="molecule type" value="protein"/>
</dbReference>
<dbReference type="Bgee" id="ENSMUSG00000026209">
    <property type="expression patterns" value="Expressed in intestinal villus and 247 other cell types or tissues"/>
</dbReference>
<dbReference type="ExpressionAtlas" id="Q9Z2W0">
    <property type="expression patterns" value="baseline and differential"/>
</dbReference>
<dbReference type="GO" id="GO:0005829">
    <property type="term" value="C:cytosol"/>
    <property type="evidence" value="ECO:0007669"/>
    <property type="project" value="Ensembl"/>
</dbReference>
<dbReference type="GO" id="GO:0004177">
    <property type="term" value="F:aminopeptidase activity"/>
    <property type="evidence" value="ECO:0007669"/>
    <property type="project" value="UniProtKB-KW"/>
</dbReference>
<dbReference type="GO" id="GO:0042802">
    <property type="term" value="F:identical protein binding"/>
    <property type="evidence" value="ECO:0007669"/>
    <property type="project" value="Ensembl"/>
</dbReference>
<dbReference type="GO" id="GO:0008237">
    <property type="term" value="F:metallopeptidase activity"/>
    <property type="evidence" value="ECO:0007669"/>
    <property type="project" value="UniProtKB-KW"/>
</dbReference>
<dbReference type="GO" id="GO:0008270">
    <property type="term" value="F:zinc ion binding"/>
    <property type="evidence" value="ECO:0007669"/>
    <property type="project" value="InterPro"/>
</dbReference>
<dbReference type="GO" id="GO:0006508">
    <property type="term" value="P:proteolysis"/>
    <property type="evidence" value="ECO:0007669"/>
    <property type="project" value="UniProtKB-KW"/>
</dbReference>
<dbReference type="CDD" id="cd05658">
    <property type="entry name" value="M18_DAP"/>
    <property type="match status" value="1"/>
</dbReference>
<dbReference type="FunFam" id="2.30.250.10:FF:000002">
    <property type="entry name" value="Aspartyl aminopeptidase"/>
    <property type="match status" value="1"/>
</dbReference>
<dbReference type="FunFam" id="3.40.630.10:FF:000152">
    <property type="entry name" value="aspartyl aminopeptidase isoform X2"/>
    <property type="match status" value="1"/>
</dbReference>
<dbReference type="Gene3D" id="2.30.250.10">
    <property type="entry name" value="Aminopeptidase i, Domain 2"/>
    <property type="match status" value="1"/>
</dbReference>
<dbReference type="Gene3D" id="3.40.630.10">
    <property type="entry name" value="Zn peptidases"/>
    <property type="match status" value="1"/>
</dbReference>
<dbReference type="InterPro" id="IPR001948">
    <property type="entry name" value="Peptidase_M18"/>
</dbReference>
<dbReference type="InterPro" id="IPR023358">
    <property type="entry name" value="Peptidase_M18_dom2"/>
</dbReference>
<dbReference type="NCBIfam" id="NF002759">
    <property type="entry name" value="PRK02813.1"/>
    <property type="match status" value="1"/>
</dbReference>
<dbReference type="PANTHER" id="PTHR28570">
    <property type="entry name" value="ASPARTYL AMINOPEPTIDASE"/>
    <property type="match status" value="1"/>
</dbReference>
<dbReference type="PANTHER" id="PTHR28570:SF3">
    <property type="entry name" value="ASPARTYL AMINOPEPTIDASE"/>
    <property type="match status" value="1"/>
</dbReference>
<dbReference type="Pfam" id="PF02127">
    <property type="entry name" value="Peptidase_M18"/>
    <property type="match status" value="1"/>
</dbReference>
<dbReference type="PRINTS" id="PR00932">
    <property type="entry name" value="AMINO1PTASE"/>
</dbReference>
<dbReference type="SUPFAM" id="SSF101821">
    <property type="entry name" value="Aminopeptidase/glucanase lid domain"/>
    <property type="match status" value="1"/>
</dbReference>
<dbReference type="SUPFAM" id="SSF53187">
    <property type="entry name" value="Zn-dependent exopeptidases"/>
    <property type="match status" value="1"/>
</dbReference>
<comment type="function">
    <text evidence="1">Aminopeptidase with specificity towards an acidic amino acid at the N-terminus. Likely to play an important role in intracellular protein and peptide metabolism (By similarity).</text>
</comment>
<comment type="catalytic activity">
    <reaction>
        <text>Release of an N-terminal aspartate or glutamate from a peptide, with a preference for aspartate.</text>
        <dbReference type="EC" id="3.4.11.21"/>
    </reaction>
</comment>
<comment type="cofactor">
    <cofactor evidence="1">
        <name>Zn(2+)</name>
        <dbReference type="ChEBI" id="CHEBI:29105"/>
    </cofactor>
    <text evidence="1">Binds 2 Zn(2+) ions per subunit.</text>
</comment>
<comment type="activity regulation">
    <text evidence="1">One of the zinc ions is readily exchangeable with other divalent cations such as manganese, which strongly stimulates the enzymatic activity.</text>
</comment>
<comment type="subunit">
    <text evidence="1">Tetrahedron-shaped homododecamer built from six homodimers.</text>
</comment>
<comment type="subcellular location">
    <subcellularLocation>
        <location>Cytoplasm</location>
    </subcellularLocation>
</comment>
<comment type="tissue specificity">
    <text>Ubiquitous.</text>
</comment>
<comment type="similarity">
    <text evidence="3">Belongs to the peptidase M18 family.</text>
</comment>
<feature type="chain" id="PRO_0000173452" description="Aspartyl aminopeptidase">
    <location>
        <begin position="1"/>
        <end position="473"/>
    </location>
</feature>
<feature type="binding site" evidence="1">
    <location>
        <position position="92"/>
    </location>
    <ligand>
        <name>Zn(2+)</name>
        <dbReference type="ChEBI" id="CHEBI:29105"/>
        <label>1</label>
    </ligand>
</feature>
<feature type="binding site" evidence="1">
    <location>
        <position position="168"/>
    </location>
    <ligand>
        <name>substrate</name>
    </ligand>
</feature>
<feature type="binding site" evidence="1">
    <location>
        <position position="262"/>
    </location>
    <ligand>
        <name>Zn(2+)</name>
        <dbReference type="ChEBI" id="CHEBI:29105"/>
        <label>1</label>
    </ligand>
</feature>
<feature type="binding site" evidence="1">
    <location>
        <position position="262"/>
    </location>
    <ligand>
        <name>Zn(2+)</name>
        <dbReference type="ChEBI" id="CHEBI:29105"/>
        <label>2</label>
    </ligand>
</feature>
<feature type="binding site" evidence="1">
    <location>
        <position position="299"/>
    </location>
    <ligand>
        <name>substrate</name>
    </ligand>
</feature>
<feature type="binding site" evidence="1">
    <location>
        <position position="300"/>
    </location>
    <ligand>
        <name>Zn(2+)</name>
        <dbReference type="ChEBI" id="CHEBI:29105"/>
        <label>2</label>
    </ligand>
</feature>
<feature type="binding site" evidence="1">
    <location>
        <position position="344"/>
    </location>
    <ligand>
        <name>substrate</name>
    </ligand>
</feature>
<feature type="binding site" evidence="1">
    <location>
        <position position="344"/>
    </location>
    <ligand>
        <name>Zn(2+)</name>
        <dbReference type="ChEBI" id="CHEBI:29105"/>
        <label>1</label>
    </ligand>
</feature>
<feature type="binding site" evidence="1">
    <location>
        <position position="347"/>
    </location>
    <ligand>
        <name>substrate</name>
    </ligand>
</feature>
<feature type="binding site" evidence="1">
    <location>
        <position position="372"/>
    </location>
    <ligand>
        <name>substrate</name>
    </ligand>
</feature>
<feature type="binding site" evidence="1">
    <location>
        <position position="379"/>
    </location>
    <ligand>
        <name>substrate</name>
    </ligand>
</feature>
<feature type="binding site" evidence="1">
    <location>
        <position position="438"/>
    </location>
    <ligand>
        <name>Zn(2+)</name>
        <dbReference type="ChEBI" id="CHEBI:29105"/>
        <label>2</label>
    </ligand>
</feature>
<feature type="modified residue" description="Phosphothreonine" evidence="2">
    <location>
        <position position="201"/>
    </location>
</feature>
<feature type="sequence conflict" description="In Ref. 1; AAD01212." evidence="3" ref="1">
    <original>K</original>
    <variation>N</variation>
    <location>
        <position position="61"/>
    </location>
</feature>
<feature type="sequence conflict" description="In Ref. 1; AAD01212." evidence="3" ref="1">
    <original>L</original>
    <variation>S</variation>
    <location>
        <position position="364"/>
    </location>
</feature>
<gene>
    <name evidence="4" type="primary">Dnpep</name>
</gene>
<protein>
    <recommendedName>
        <fullName evidence="3">Aspartyl aminopeptidase</fullName>
        <ecNumber evidence="2">3.4.11.21</ecNumber>
    </recommendedName>
</protein>
<organism>
    <name type="scientific">Mus musculus</name>
    <name type="common">Mouse</name>
    <dbReference type="NCBI Taxonomy" id="10090"/>
    <lineage>
        <taxon>Eukaryota</taxon>
        <taxon>Metazoa</taxon>
        <taxon>Chordata</taxon>
        <taxon>Craniata</taxon>
        <taxon>Vertebrata</taxon>
        <taxon>Euteleostomi</taxon>
        <taxon>Mammalia</taxon>
        <taxon>Eutheria</taxon>
        <taxon>Euarchontoglires</taxon>
        <taxon>Glires</taxon>
        <taxon>Rodentia</taxon>
        <taxon>Myomorpha</taxon>
        <taxon>Muroidea</taxon>
        <taxon>Muridae</taxon>
        <taxon>Murinae</taxon>
        <taxon>Mus</taxon>
        <taxon>Mus</taxon>
    </lineage>
</organism>
<proteinExistence type="evidence at protein level"/>
<reference key="1">
    <citation type="journal article" date="1998" name="J. Biol. Chem.">
        <title>Purification, characterization, and cloning of a cytosolic aspartyl aminopeptidase.</title>
        <authorList>
            <person name="Wilk S."/>
            <person name="Wilk E."/>
            <person name="Magnusson R.P."/>
        </authorList>
    </citation>
    <scope>NUCLEOTIDE SEQUENCE [MRNA]</scope>
</reference>
<reference key="2">
    <citation type="journal article" date="2005" name="Science">
        <title>The transcriptional landscape of the mammalian genome.</title>
        <authorList>
            <person name="Carninci P."/>
            <person name="Kasukawa T."/>
            <person name="Katayama S."/>
            <person name="Gough J."/>
            <person name="Frith M.C."/>
            <person name="Maeda N."/>
            <person name="Oyama R."/>
            <person name="Ravasi T."/>
            <person name="Lenhard B."/>
            <person name="Wells C."/>
            <person name="Kodzius R."/>
            <person name="Shimokawa K."/>
            <person name="Bajic V.B."/>
            <person name="Brenner S.E."/>
            <person name="Batalov S."/>
            <person name="Forrest A.R."/>
            <person name="Zavolan M."/>
            <person name="Davis M.J."/>
            <person name="Wilming L.G."/>
            <person name="Aidinis V."/>
            <person name="Allen J.E."/>
            <person name="Ambesi-Impiombato A."/>
            <person name="Apweiler R."/>
            <person name="Aturaliya R.N."/>
            <person name="Bailey T.L."/>
            <person name="Bansal M."/>
            <person name="Baxter L."/>
            <person name="Beisel K.W."/>
            <person name="Bersano T."/>
            <person name="Bono H."/>
            <person name="Chalk A.M."/>
            <person name="Chiu K.P."/>
            <person name="Choudhary V."/>
            <person name="Christoffels A."/>
            <person name="Clutterbuck D.R."/>
            <person name="Crowe M.L."/>
            <person name="Dalla E."/>
            <person name="Dalrymple B.P."/>
            <person name="de Bono B."/>
            <person name="Della Gatta G."/>
            <person name="di Bernardo D."/>
            <person name="Down T."/>
            <person name="Engstrom P."/>
            <person name="Fagiolini M."/>
            <person name="Faulkner G."/>
            <person name="Fletcher C.F."/>
            <person name="Fukushima T."/>
            <person name="Furuno M."/>
            <person name="Futaki S."/>
            <person name="Gariboldi M."/>
            <person name="Georgii-Hemming P."/>
            <person name="Gingeras T.R."/>
            <person name="Gojobori T."/>
            <person name="Green R.E."/>
            <person name="Gustincich S."/>
            <person name="Harbers M."/>
            <person name="Hayashi Y."/>
            <person name="Hensch T.K."/>
            <person name="Hirokawa N."/>
            <person name="Hill D."/>
            <person name="Huminiecki L."/>
            <person name="Iacono M."/>
            <person name="Ikeo K."/>
            <person name="Iwama A."/>
            <person name="Ishikawa T."/>
            <person name="Jakt M."/>
            <person name="Kanapin A."/>
            <person name="Katoh M."/>
            <person name="Kawasawa Y."/>
            <person name="Kelso J."/>
            <person name="Kitamura H."/>
            <person name="Kitano H."/>
            <person name="Kollias G."/>
            <person name="Krishnan S.P."/>
            <person name="Kruger A."/>
            <person name="Kummerfeld S.K."/>
            <person name="Kurochkin I.V."/>
            <person name="Lareau L.F."/>
            <person name="Lazarevic D."/>
            <person name="Lipovich L."/>
            <person name="Liu J."/>
            <person name="Liuni S."/>
            <person name="McWilliam S."/>
            <person name="Madan Babu M."/>
            <person name="Madera M."/>
            <person name="Marchionni L."/>
            <person name="Matsuda H."/>
            <person name="Matsuzawa S."/>
            <person name="Miki H."/>
            <person name="Mignone F."/>
            <person name="Miyake S."/>
            <person name="Morris K."/>
            <person name="Mottagui-Tabar S."/>
            <person name="Mulder N."/>
            <person name="Nakano N."/>
            <person name="Nakauchi H."/>
            <person name="Ng P."/>
            <person name="Nilsson R."/>
            <person name="Nishiguchi S."/>
            <person name="Nishikawa S."/>
            <person name="Nori F."/>
            <person name="Ohara O."/>
            <person name="Okazaki Y."/>
            <person name="Orlando V."/>
            <person name="Pang K.C."/>
            <person name="Pavan W.J."/>
            <person name="Pavesi G."/>
            <person name="Pesole G."/>
            <person name="Petrovsky N."/>
            <person name="Piazza S."/>
            <person name="Reed J."/>
            <person name="Reid J.F."/>
            <person name="Ring B.Z."/>
            <person name="Ringwald M."/>
            <person name="Rost B."/>
            <person name="Ruan Y."/>
            <person name="Salzberg S.L."/>
            <person name="Sandelin A."/>
            <person name="Schneider C."/>
            <person name="Schoenbach C."/>
            <person name="Sekiguchi K."/>
            <person name="Semple C.A."/>
            <person name="Seno S."/>
            <person name="Sessa L."/>
            <person name="Sheng Y."/>
            <person name="Shibata Y."/>
            <person name="Shimada H."/>
            <person name="Shimada K."/>
            <person name="Silva D."/>
            <person name="Sinclair B."/>
            <person name="Sperling S."/>
            <person name="Stupka E."/>
            <person name="Sugiura K."/>
            <person name="Sultana R."/>
            <person name="Takenaka Y."/>
            <person name="Taki K."/>
            <person name="Tammoja K."/>
            <person name="Tan S.L."/>
            <person name="Tang S."/>
            <person name="Taylor M.S."/>
            <person name="Tegner J."/>
            <person name="Teichmann S.A."/>
            <person name="Ueda H.R."/>
            <person name="van Nimwegen E."/>
            <person name="Verardo R."/>
            <person name="Wei C.L."/>
            <person name="Yagi K."/>
            <person name="Yamanishi H."/>
            <person name="Zabarovsky E."/>
            <person name="Zhu S."/>
            <person name="Zimmer A."/>
            <person name="Hide W."/>
            <person name="Bult C."/>
            <person name="Grimmond S.M."/>
            <person name="Teasdale R.D."/>
            <person name="Liu E.T."/>
            <person name="Brusic V."/>
            <person name="Quackenbush J."/>
            <person name="Wahlestedt C."/>
            <person name="Mattick J.S."/>
            <person name="Hume D.A."/>
            <person name="Kai C."/>
            <person name="Sasaki D."/>
            <person name="Tomaru Y."/>
            <person name="Fukuda S."/>
            <person name="Kanamori-Katayama M."/>
            <person name="Suzuki M."/>
            <person name="Aoki J."/>
            <person name="Arakawa T."/>
            <person name="Iida J."/>
            <person name="Imamura K."/>
            <person name="Itoh M."/>
            <person name="Kato T."/>
            <person name="Kawaji H."/>
            <person name="Kawagashira N."/>
            <person name="Kawashima T."/>
            <person name="Kojima M."/>
            <person name="Kondo S."/>
            <person name="Konno H."/>
            <person name="Nakano K."/>
            <person name="Ninomiya N."/>
            <person name="Nishio T."/>
            <person name="Okada M."/>
            <person name="Plessy C."/>
            <person name="Shibata K."/>
            <person name="Shiraki T."/>
            <person name="Suzuki S."/>
            <person name="Tagami M."/>
            <person name="Waki K."/>
            <person name="Watahiki A."/>
            <person name="Okamura-Oho Y."/>
            <person name="Suzuki H."/>
            <person name="Kawai J."/>
            <person name="Hayashizaki Y."/>
        </authorList>
    </citation>
    <scope>NUCLEOTIDE SEQUENCE [LARGE SCALE MRNA]</scope>
    <source>
        <tissue>Mammary gland</tissue>
    </source>
</reference>
<reference key="3">
    <citation type="submission" date="2005-07" db="EMBL/GenBank/DDBJ databases">
        <authorList>
            <person name="Mural R.J."/>
            <person name="Adams M.D."/>
            <person name="Myers E.W."/>
            <person name="Smith H.O."/>
            <person name="Venter J.C."/>
        </authorList>
    </citation>
    <scope>NUCLEOTIDE SEQUENCE [LARGE SCALE GENOMIC DNA]</scope>
</reference>
<reference key="4">
    <citation type="journal article" date="2004" name="Genome Res.">
        <title>The status, quality, and expansion of the NIH full-length cDNA project: the Mammalian Gene Collection (MGC).</title>
        <authorList>
            <consortium name="The MGC Project Team"/>
        </authorList>
    </citation>
    <scope>NUCLEOTIDE SEQUENCE [LARGE SCALE MRNA]</scope>
    <source>
        <strain>C57BL/6J</strain>
        <tissue>Eye</tissue>
    </source>
</reference>
<reference key="5">
    <citation type="journal article" date="2010" name="Cell">
        <title>A tissue-specific atlas of mouse protein phosphorylation and expression.</title>
        <authorList>
            <person name="Huttlin E.L."/>
            <person name="Jedrychowski M.P."/>
            <person name="Elias J.E."/>
            <person name="Goswami T."/>
            <person name="Rad R."/>
            <person name="Beausoleil S.A."/>
            <person name="Villen J."/>
            <person name="Haas W."/>
            <person name="Sowa M.E."/>
            <person name="Gygi S.P."/>
        </authorList>
    </citation>
    <scope>IDENTIFICATION BY MASS SPECTROMETRY [LARGE SCALE ANALYSIS]</scope>
    <source>
        <tissue>Brain</tissue>
        <tissue>Brown adipose tissue</tissue>
        <tissue>Heart</tissue>
        <tissue>Kidney</tissue>
        <tissue>Liver</tissue>
        <tissue>Lung</tissue>
        <tissue>Pancreas</tissue>
        <tissue>Spleen</tissue>
        <tissue>Testis</tissue>
    </source>
</reference>
<keyword id="KW-0031">Aminopeptidase</keyword>
<keyword id="KW-0963">Cytoplasm</keyword>
<keyword id="KW-0378">Hydrolase</keyword>
<keyword id="KW-0479">Metal-binding</keyword>
<keyword id="KW-0482">Metalloprotease</keyword>
<keyword id="KW-0597">Phosphoprotein</keyword>
<keyword id="KW-0645">Protease</keyword>
<keyword id="KW-1185">Reference proteome</keyword>
<keyword id="KW-0862">Zinc</keyword>
<accession>Q9Z2W0</accession>
<accession>Q56A00</accession>
<name>DNPEP_MOUSE</name>
<sequence>MAMNGRARKEAIQATARELLKFVNRSPSPFHVVAECRSRLLQAGFRELKETEGWDIVPENKYFLTRNSSSIIAFAVGGQYVPGNGFSLIGAHTDSPCLRVKRKSRRSQVGYHQVGVETYGGGIWSTWFDRDLTLAGRVIIKCPTSGRLEQRLVHIERPILRIPHLAIHLQRNINENFGPNTEIHLVPILATAVQEELEKGTPEPGPLGATDERHHSVLMSLLCTHLGLSPDSIMEMELCLADTQPAVLGGAYEEFIFAPRLDNLHSCFCALQALIDSCASPASLARDPHVRMVTLYDNEEVGSESAQGAQSLLTELILRRISASPQRLTAFEEAIPKSFMISADMAHAVHPNYSDKHEENHRPLFHKGPVIKVNSKQRYASNAVSESMIREVAGQVGVPLQDLMVRNDSPCGTTIGPILASRLGLRVLDLGSPQLAMHSIRETACTTGVLQTLTLFKGFFELFPSVSRNLLVD</sequence>